<dbReference type="EC" id="3.1.3.11" evidence="1"/>
<dbReference type="EMBL" id="AP009324">
    <property type="protein sequence ID" value="BAF79383.1"/>
    <property type="molecule type" value="Genomic_DNA"/>
</dbReference>
<dbReference type="RefSeq" id="WP_000192172.1">
    <property type="nucleotide sequence ID" value="NC_009782.1"/>
</dbReference>
<dbReference type="KEGG" id="saw:SAHV_2500"/>
<dbReference type="HOGENOM" id="CLU_028392_2_0_9"/>
<dbReference type="UniPathway" id="UPA00138"/>
<dbReference type="GO" id="GO:0042132">
    <property type="term" value="F:fructose 1,6-bisphosphate 1-phosphatase activity"/>
    <property type="evidence" value="ECO:0007669"/>
    <property type="project" value="UniProtKB-UniRule"/>
</dbReference>
<dbReference type="GO" id="GO:0006094">
    <property type="term" value="P:gluconeogenesis"/>
    <property type="evidence" value="ECO:0007669"/>
    <property type="project" value="UniProtKB-UniRule"/>
</dbReference>
<dbReference type="Gene3D" id="3.60.21.10">
    <property type="match status" value="1"/>
</dbReference>
<dbReference type="HAMAP" id="MF_01854">
    <property type="entry name" value="FBPase_class3"/>
    <property type="match status" value="1"/>
</dbReference>
<dbReference type="InterPro" id="IPR009164">
    <property type="entry name" value="FBPtase_class3"/>
</dbReference>
<dbReference type="InterPro" id="IPR029052">
    <property type="entry name" value="Metallo-depent_PP-like"/>
</dbReference>
<dbReference type="Pfam" id="PF06874">
    <property type="entry name" value="FBPase_2"/>
    <property type="match status" value="1"/>
</dbReference>
<dbReference type="PIRSF" id="PIRSF000906">
    <property type="entry name" value="FBPtase_Bacill"/>
    <property type="match status" value="1"/>
</dbReference>
<dbReference type="SUPFAM" id="SSF56300">
    <property type="entry name" value="Metallo-dependent phosphatases"/>
    <property type="match status" value="2"/>
</dbReference>
<organism>
    <name type="scientific">Staphylococcus aureus (strain Mu3 / ATCC 700698)</name>
    <dbReference type="NCBI Taxonomy" id="418127"/>
    <lineage>
        <taxon>Bacteria</taxon>
        <taxon>Bacillati</taxon>
        <taxon>Bacillota</taxon>
        <taxon>Bacilli</taxon>
        <taxon>Bacillales</taxon>
        <taxon>Staphylococcaceae</taxon>
        <taxon>Staphylococcus</taxon>
    </lineage>
</organism>
<proteinExistence type="inferred from homology"/>
<name>F16PC_STAA1</name>
<feature type="chain" id="PRO_0000359988" description="Fructose-1,6-bisphosphatase class 3">
    <location>
        <begin position="1"/>
        <end position="654"/>
    </location>
</feature>
<feature type="region of interest" description="Disordered" evidence="2">
    <location>
        <begin position="288"/>
        <end position="307"/>
    </location>
</feature>
<feature type="compositionally biased region" description="Basic and acidic residues" evidence="2">
    <location>
        <begin position="298"/>
        <end position="307"/>
    </location>
</feature>
<evidence type="ECO:0000255" key="1">
    <source>
        <dbReference type="HAMAP-Rule" id="MF_01854"/>
    </source>
</evidence>
<evidence type="ECO:0000256" key="2">
    <source>
        <dbReference type="SAM" id="MobiDB-lite"/>
    </source>
</evidence>
<keyword id="KW-0119">Carbohydrate metabolism</keyword>
<keyword id="KW-0378">Hydrolase</keyword>
<keyword id="KW-0464">Manganese</keyword>
<protein>
    <recommendedName>
        <fullName evidence="1">Fructose-1,6-bisphosphatase class 3</fullName>
        <shortName evidence="1">FBPase class 3</shortName>
        <ecNumber evidence="1">3.1.3.11</ecNumber>
    </recommendedName>
    <alternativeName>
        <fullName evidence="1">D-fructose-1,6-bisphosphate 1-phosphohydrolase class 3</fullName>
    </alternativeName>
</protein>
<sequence length="654" mass="76175">MTQITEKELKKKYLDLLSQNFDTPEKLATEIINLESILELPKGTEHFVSDLHGEYEAFQHVLRNGSGNVRAKINDIFKERLSTKELNDLTALVYYPEDKLKLIKSDFQSCGQLNVWYITTIEHLIELIKYCSSKYTRSKLRKALPKQYVYIIEELLYKSNEYQNKKSYYETLVNQVIELKQADDLIIGLAYSVQRLVVDHLHVVGDIYDRGPQPDKIMDTLINYHSLDIQWGNHDVLWVGAYAGSKVCLANLLRICARYDNLDIIEDAYGINLRPLLTLAEKYYDADNPAFKPKKRPDKHERLTQREESQITKIHQAIAMIQFKLEIPIIKRRPNFEMEERLVLEKVNYDTNEITVYGNTYPLKDTCFQTINRNNPAELLPEEEEVMNKLLLSFQQSEKLRRHMSFLMRKGSLYLPYNGNLLIHGCIPVDENGEMESFEIDGHTYSGQELLDVFEYHVRKSFDEKENTDDLSTDLVWYLWTGKYSSLFGKRAMTTFERYFIADKASHKEEKNPYYHLREDVNMVRKMLSDFGLNPDEGRIINGHTPVKEINGEDPIKADGKMLVIDGGFSKAYQSTTGIAGYTLLYNSFGMQLVAHQQFNAKEKILSEGIDELSIKRVVDKELQRKKIRDTNIGKELQAQIDILKMLMHDRYLD</sequence>
<reference key="1">
    <citation type="journal article" date="2008" name="Antimicrob. Agents Chemother.">
        <title>Mutated response regulator graR is responsible for phenotypic conversion of Staphylococcus aureus from heterogeneous vancomycin-intermediate resistance to vancomycin-intermediate resistance.</title>
        <authorList>
            <person name="Neoh H.-M."/>
            <person name="Cui L."/>
            <person name="Yuzawa H."/>
            <person name="Takeuchi F."/>
            <person name="Matsuo M."/>
            <person name="Hiramatsu K."/>
        </authorList>
    </citation>
    <scope>NUCLEOTIDE SEQUENCE [LARGE SCALE GENOMIC DNA]</scope>
    <source>
        <strain>Mu3 / ATCC 700698</strain>
    </source>
</reference>
<accession>A7X6K5</accession>
<comment type="catalytic activity">
    <reaction evidence="1">
        <text>beta-D-fructose 1,6-bisphosphate + H2O = beta-D-fructose 6-phosphate + phosphate</text>
        <dbReference type="Rhea" id="RHEA:11064"/>
        <dbReference type="ChEBI" id="CHEBI:15377"/>
        <dbReference type="ChEBI" id="CHEBI:32966"/>
        <dbReference type="ChEBI" id="CHEBI:43474"/>
        <dbReference type="ChEBI" id="CHEBI:57634"/>
        <dbReference type="EC" id="3.1.3.11"/>
    </reaction>
</comment>
<comment type="cofactor">
    <cofactor evidence="1">
        <name>Mn(2+)</name>
        <dbReference type="ChEBI" id="CHEBI:29035"/>
    </cofactor>
</comment>
<comment type="pathway">
    <text evidence="1">Carbohydrate biosynthesis; gluconeogenesis.</text>
</comment>
<comment type="similarity">
    <text evidence="1">Belongs to the FBPase class 3 family.</text>
</comment>
<gene>
    <name evidence="1" type="primary">fbp</name>
    <name type="ordered locus">SAHV_2500</name>
</gene>